<protein>
    <recommendedName>
        <fullName>1-aminocyclopropane-1-carboxylate oxidase homolog 7</fullName>
        <ecNumber>1.14.-.-</ecNumber>
    </recommendedName>
</protein>
<dbReference type="EC" id="1.14.-.-"/>
<dbReference type="EMBL" id="AC000104">
    <property type="protein sequence ID" value="AAB70438.1"/>
    <property type="molecule type" value="Genomic_DNA"/>
</dbReference>
<dbReference type="EMBL" id="CP002684">
    <property type="protein sequence ID" value="AEE27690.1"/>
    <property type="molecule type" value="Genomic_DNA"/>
</dbReference>
<dbReference type="EMBL" id="AK228520">
    <property type="protein sequence ID" value="BAF00443.1"/>
    <property type="molecule type" value="mRNA"/>
</dbReference>
<dbReference type="PIR" id="E86175">
    <property type="entry name" value="E86175"/>
</dbReference>
<dbReference type="RefSeq" id="NP_171933.1">
    <property type="nucleotide sequence ID" value="NM_100318.5"/>
</dbReference>
<dbReference type="SMR" id="P93821"/>
<dbReference type="FunCoup" id="P93821">
    <property type="interactions" value="12"/>
</dbReference>
<dbReference type="STRING" id="3702.P93821"/>
<dbReference type="iPTMnet" id="P93821"/>
<dbReference type="PaxDb" id="3702-AT1G04380.1"/>
<dbReference type="ProteomicsDB" id="244399"/>
<dbReference type="EnsemblPlants" id="AT1G04380.1">
    <property type="protein sequence ID" value="AT1G04380.1"/>
    <property type="gene ID" value="AT1G04380"/>
</dbReference>
<dbReference type="GeneID" id="839535"/>
<dbReference type="Gramene" id="AT1G04380.1">
    <property type="protein sequence ID" value="AT1G04380.1"/>
    <property type="gene ID" value="AT1G04380"/>
</dbReference>
<dbReference type="KEGG" id="ath:AT1G04380"/>
<dbReference type="Araport" id="AT1G04380"/>
<dbReference type="TAIR" id="AT1G04380"/>
<dbReference type="eggNOG" id="KOG0143">
    <property type="taxonomic scope" value="Eukaryota"/>
</dbReference>
<dbReference type="HOGENOM" id="CLU_010119_0_0_1"/>
<dbReference type="InParanoid" id="P93821"/>
<dbReference type="OMA" id="SLDCMKG"/>
<dbReference type="PhylomeDB" id="P93821"/>
<dbReference type="BioCyc" id="ARA:AT1G04380-MONOMER"/>
<dbReference type="PRO" id="PR:P93821"/>
<dbReference type="Proteomes" id="UP000006548">
    <property type="component" value="Chromosome 1"/>
</dbReference>
<dbReference type="ExpressionAtlas" id="P93821">
    <property type="expression patterns" value="baseline and differential"/>
</dbReference>
<dbReference type="GO" id="GO:0051213">
    <property type="term" value="F:dioxygenase activity"/>
    <property type="evidence" value="ECO:0007669"/>
    <property type="project" value="UniProtKB-ARBA"/>
</dbReference>
<dbReference type="GO" id="GO:0046872">
    <property type="term" value="F:metal ion binding"/>
    <property type="evidence" value="ECO:0007669"/>
    <property type="project" value="UniProtKB-KW"/>
</dbReference>
<dbReference type="GO" id="GO:0009058">
    <property type="term" value="P:biosynthetic process"/>
    <property type="evidence" value="ECO:0007669"/>
    <property type="project" value="UniProtKB-ARBA"/>
</dbReference>
<dbReference type="FunFam" id="2.60.120.330:FF:000005">
    <property type="entry name" value="1-aminocyclopropane-1-carboxylate oxidase homolog 1"/>
    <property type="match status" value="1"/>
</dbReference>
<dbReference type="Gene3D" id="2.60.120.330">
    <property type="entry name" value="B-lactam Antibiotic, Isopenicillin N Synthase, Chain"/>
    <property type="match status" value="1"/>
</dbReference>
<dbReference type="InterPro" id="IPR026992">
    <property type="entry name" value="DIOX_N"/>
</dbReference>
<dbReference type="InterPro" id="IPR044861">
    <property type="entry name" value="IPNS-like_FE2OG_OXY"/>
</dbReference>
<dbReference type="InterPro" id="IPR027443">
    <property type="entry name" value="IPNS-like_sf"/>
</dbReference>
<dbReference type="InterPro" id="IPR005123">
    <property type="entry name" value="Oxoglu/Fe-dep_dioxygenase_dom"/>
</dbReference>
<dbReference type="PANTHER" id="PTHR10209:SF473">
    <property type="entry name" value="1-AMINOCYCLOPROPANE-1-CARBOXYLATE OXIDASE HOMOLOG 10-RELATED"/>
    <property type="match status" value="1"/>
</dbReference>
<dbReference type="PANTHER" id="PTHR10209">
    <property type="entry name" value="OXIDOREDUCTASE, 2OG-FE II OXYGENASE FAMILY PROTEIN"/>
    <property type="match status" value="1"/>
</dbReference>
<dbReference type="Pfam" id="PF03171">
    <property type="entry name" value="2OG-FeII_Oxy"/>
    <property type="match status" value="1"/>
</dbReference>
<dbReference type="Pfam" id="PF14226">
    <property type="entry name" value="DIOX_N"/>
    <property type="match status" value="1"/>
</dbReference>
<dbReference type="SUPFAM" id="SSF51197">
    <property type="entry name" value="Clavaminate synthase-like"/>
    <property type="match status" value="1"/>
</dbReference>
<dbReference type="PROSITE" id="PS51471">
    <property type="entry name" value="FE2OG_OXY"/>
    <property type="match status" value="1"/>
</dbReference>
<sequence length="345" mass="38618">MVVKNSIKFNSQSERKSLEETKVPPIFGLPPDALDDKKPTSDFAVPIIDFAGVHKSREAVVEKIKAAAENWGIFQVINHGVPLSVLEEIQNGVVRFHEEDPEVKKSYFSLDLTKTFIYHNNFELYSSSAGNWRDSFVCYMDPDPSNPEDLPVACRDAMIGYSKHVMSLGGLLFELLSEALGLNSDTLKSMGCMKGLHMICHYYPPCPQPDQTLGTSKHSDNTFITILLQDNIGGLQILHQDCWVDVSPLPGALIINIGDFLQLMTNDKFISVDHRVLTNRVGPRISIACFFSSSMNPNSTVYGPIKELLSEENPPKYRDFTIPEYSKGYIEKGLDGTSHLSHYRI</sequence>
<gene>
    <name type="ordered locus">At1g04380</name>
    <name type="ORF">F19P19.18</name>
</gene>
<feature type="chain" id="PRO_0000408282" description="1-aminocyclopropane-1-carboxylate oxidase homolog 7">
    <location>
        <begin position="1"/>
        <end position="345"/>
    </location>
</feature>
<feature type="domain" description="Fe2OG dioxygenase" evidence="1">
    <location>
        <begin position="194"/>
        <end position="293"/>
    </location>
</feature>
<feature type="binding site" evidence="1">
    <location>
        <position position="218"/>
    </location>
    <ligand>
        <name>Fe cation</name>
        <dbReference type="ChEBI" id="CHEBI:24875"/>
    </ligand>
</feature>
<feature type="binding site" evidence="1">
    <location>
        <position position="220"/>
    </location>
    <ligand>
        <name>Fe cation</name>
        <dbReference type="ChEBI" id="CHEBI:24875"/>
    </ligand>
</feature>
<feature type="binding site" evidence="1">
    <location>
        <position position="274"/>
    </location>
    <ligand>
        <name>Fe cation</name>
        <dbReference type="ChEBI" id="CHEBI:24875"/>
    </ligand>
</feature>
<feature type="binding site" evidence="1">
    <location>
        <position position="284"/>
    </location>
    <ligand>
        <name>2-oxoglutarate</name>
        <dbReference type="ChEBI" id="CHEBI:16810"/>
    </ligand>
</feature>
<feature type="cross-link" description="Glycyl lysine isopeptide (Lys-Gly) (interchain with G-Cter in ubiquitin)" evidence="3">
    <location>
        <position position="16"/>
    </location>
</feature>
<feature type="sequence conflict" description="In Ref. 3; BAF00443." evidence="2" ref="3">
    <original>P</original>
    <variation>T</variation>
    <location>
        <position position="315"/>
    </location>
</feature>
<accession>P93821</accession>
<accession>Q0WR06</accession>
<reference key="1">
    <citation type="journal article" date="2000" name="Nature">
        <title>Sequence and analysis of chromosome 1 of the plant Arabidopsis thaliana.</title>
        <authorList>
            <person name="Theologis A."/>
            <person name="Ecker J.R."/>
            <person name="Palm C.J."/>
            <person name="Federspiel N.A."/>
            <person name="Kaul S."/>
            <person name="White O."/>
            <person name="Alonso J."/>
            <person name="Altafi H."/>
            <person name="Araujo R."/>
            <person name="Bowman C.L."/>
            <person name="Brooks S.Y."/>
            <person name="Buehler E."/>
            <person name="Chan A."/>
            <person name="Chao Q."/>
            <person name="Chen H."/>
            <person name="Cheuk R.F."/>
            <person name="Chin C.W."/>
            <person name="Chung M.K."/>
            <person name="Conn L."/>
            <person name="Conway A.B."/>
            <person name="Conway A.R."/>
            <person name="Creasy T.H."/>
            <person name="Dewar K."/>
            <person name="Dunn P."/>
            <person name="Etgu P."/>
            <person name="Feldblyum T.V."/>
            <person name="Feng J.-D."/>
            <person name="Fong B."/>
            <person name="Fujii C.Y."/>
            <person name="Gill J.E."/>
            <person name="Goldsmith A.D."/>
            <person name="Haas B."/>
            <person name="Hansen N.F."/>
            <person name="Hughes B."/>
            <person name="Huizar L."/>
            <person name="Hunter J.L."/>
            <person name="Jenkins J."/>
            <person name="Johnson-Hopson C."/>
            <person name="Khan S."/>
            <person name="Khaykin E."/>
            <person name="Kim C.J."/>
            <person name="Koo H.L."/>
            <person name="Kremenetskaia I."/>
            <person name="Kurtz D.B."/>
            <person name="Kwan A."/>
            <person name="Lam B."/>
            <person name="Langin-Hooper S."/>
            <person name="Lee A."/>
            <person name="Lee J.M."/>
            <person name="Lenz C.A."/>
            <person name="Li J.H."/>
            <person name="Li Y.-P."/>
            <person name="Lin X."/>
            <person name="Liu S.X."/>
            <person name="Liu Z.A."/>
            <person name="Luros J.S."/>
            <person name="Maiti R."/>
            <person name="Marziali A."/>
            <person name="Militscher J."/>
            <person name="Miranda M."/>
            <person name="Nguyen M."/>
            <person name="Nierman W.C."/>
            <person name="Osborne B.I."/>
            <person name="Pai G."/>
            <person name="Peterson J."/>
            <person name="Pham P.K."/>
            <person name="Rizzo M."/>
            <person name="Rooney T."/>
            <person name="Rowley D."/>
            <person name="Sakano H."/>
            <person name="Salzberg S.L."/>
            <person name="Schwartz J.R."/>
            <person name="Shinn P."/>
            <person name="Southwick A.M."/>
            <person name="Sun H."/>
            <person name="Tallon L.J."/>
            <person name="Tambunga G."/>
            <person name="Toriumi M.J."/>
            <person name="Town C.D."/>
            <person name="Utterback T."/>
            <person name="Van Aken S."/>
            <person name="Vaysberg M."/>
            <person name="Vysotskaia V.S."/>
            <person name="Walker M."/>
            <person name="Wu D."/>
            <person name="Yu G."/>
            <person name="Fraser C.M."/>
            <person name="Venter J.C."/>
            <person name="Davis R.W."/>
        </authorList>
    </citation>
    <scope>NUCLEOTIDE SEQUENCE [LARGE SCALE GENOMIC DNA]</scope>
    <source>
        <strain>cv. Columbia</strain>
    </source>
</reference>
<reference key="2">
    <citation type="journal article" date="2017" name="Plant J.">
        <title>Araport11: a complete reannotation of the Arabidopsis thaliana reference genome.</title>
        <authorList>
            <person name="Cheng C.Y."/>
            <person name="Krishnakumar V."/>
            <person name="Chan A.P."/>
            <person name="Thibaud-Nissen F."/>
            <person name="Schobel S."/>
            <person name="Town C.D."/>
        </authorList>
    </citation>
    <scope>GENOME REANNOTATION</scope>
    <source>
        <strain>cv. Columbia</strain>
    </source>
</reference>
<reference key="3">
    <citation type="submission" date="2006-07" db="EMBL/GenBank/DDBJ databases">
        <title>Large-scale analysis of RIKEN Arabidopsis full-length (RAFL) cDNAs.</title>
        <authorList>
            <person name="Totoki Y."/>
            <person name="Seki M."/>
            <person name="Ishida J."/>
            <person name="Nakajima M."/>
            <person name="Enju A."/>
            <person name="Kamiya A."/>
            <person name="Narusaka M."/>
            <person name="Shin-i T."/>
            <person name="Nakagawa M."/>
            <person name="Sakamoto N."/>
            <person name="Oishi K."/>
            <person name="Kohara Y."/>
            <person name="Kobayashi M."/>
            <person name="Toyoda A."/>
            <person name="Sakaki Y."/>
            <person name="Sakurai T."/>
            <person name="Iida K."/>
            <person name="Akiyama K."/>
            <person name="Satou M."/>
            <person name="Toyoda T."/>
            <person name="Konagaya A."/>
            <person name="Carninci P."/>
            <person name="Kawai J."/>
            <person name="Hayashizaki Y."/>
            <person name="Shinozaki K."/>
        </authorList>
    </citation>
    <scope>NUCLEOTIDE SEQUENCE [LARGE SCALE MRNA]</scope>
    <source>
        <strain>cv. Columbia</strain>
    </source>
</reference>
<reference key="4">
    <citation type="journal article" date="2007" name="Mol. Cell. Proteomics">
        <title>Multidimensional protein identification technology (MudPIT) analysis of ubiquitinated proteins in plants.</title>
        <authorList>
            <person name="Maor R."/>
            <person name="Jones A."/>
            <person name="Nuehse T.S."/>
            <person name="Studholme D.J."/>
            <person name="Peck S.C."/>
            <person name="Shirasu K."/>
        </authorList>
    </citation>
    <scope>UBIQUITINATION [LARGE SCALE ANALYSIS] AT LYS-16</scope>
    <scope>IDENTIFICATION BY MASS SPECTROMETRY [LARGE SCALE ANALYSIS]</scope>
    <source>
        <strain>cv. Landsberg erecta</strain>
    </source>
</reference>
<organism>
    <name type="scientific">Arabidopsis thaliana</name>
    <name type="common">Mouse-ear cress</name>
    <dbReference type="NCBI Taxonomy" id="3702"/>
    <lineage>
        <taxon>Eukaryota</taxon>
        <taxon>Viridiplantae</taxon>
        <taxon>Streptophyta</taxon>
        <taxon>Embryophyta</taxon>
        <taxon>Tracheophyta</taxon>
        <taxon>Spermatophyta</taxon>
        <taxon>Magnoliopsida</taxon>
        <taxon>eudicotyledons</taxon>
        <taxon>Gunneridae</taxon>
        <taxon>Pentapetalae</taxon>
        <taxon>rosids</taxon>
        <taxon>malvids</taxon>
        <taxon>Brassicales</taxon>
        <taxon>Brassicaceae</taxon>
        <taxon>Camelineae</taxon>
        <taxon>Arabidopsis</taxon>
    </lineage>
</organism>
<proteinExistence type="evidence at protein level"/>
<keyword id="KW-0408">Iron</keyword>
<keyword id="KW-1017">Isopeptide bond</keyword>
<keyword id="KW-0479">Metal-binding</keyword>
<keyword id="KW-0560">Oxidoreductase</keyword>
<keyword id="KW-1185">Reference proteome</keyword>
<keyword id="KW-0832">Ubl conjugation</keyword>
<evidence type="ECO:0000255" key="1">
    <source>
        <dbReference type="PROSITE-ProRule" id="PRU00805"/>
    </source>
</evidence>
<evidence type="ECO:0000305" key="2"/>
<evidence type="ECO:0007744" key="3">
    <source>
    </source>
</evidence>
<name>ACCH7_ARATH</name>
<comment type="cofactor">
    <cofactor evidence="1">
        <name>Fe(2+)</name>
        <dbReference type="ChEBI" id="CHEBI:29033"/>
    </cofactor>
    <text evidence="1">Binds 1 Fe(2+) ion per subunit.</text>
</comment>
<comment type="similarity">
    <text evidence="2">Belongs to the iron/ascorbate-dependent oxidoreductase family.</text>
</comment>